<name>METE_RUTMC</name>
<protein>
    <recommendedName>
        <fullName evidence="1">5-methyltetrahydropteroyltriglutamate--homocysteine methyltransferase</fullName>
        <ecNumber evidence="1">2.1.1.14</ecNumber>
    </recommendedName>
    <alternativeName>
        <fullName evidence="1">Cobalamin-independent methionine synthase</fullName>
    </alternativeName>
    <alternativeName>
        <fullName evidence="1">Methionine synthase, vitamin-B12 independent isozyme</fullName>
    </alternativeName>
</protein>
<keyword id="KW-0028">Amino-acid biosynthesis</keyword>
<keyword id="KW-0479">Metal-binding</keyword>
<keyword id="KW-0486">Methionine biosynthesis</keyword>
<keyword id="KW-0489">Methyltransferase</keyword>
<keyword id="KW-0677">Repeat</keyword>
<keyword id="KW-0808">Transferase</keyword>
<keyword id="KW-0862">Zinc</keyword>
<comment type="function">
    <text evidence="1">Catalyzes the transfer of a methyl group from 5-methyltetrahydrofolate to homocysteine resulting in methionine formation.</text>
</comment>
<comment type="catalytic activity">
    <reaction evidence="1">
        <text>5-methyltetrahydropteroyltri-L-glutamate + L-homocysteine = tetrahydropteroyltri-L-glutamate + L-methionine</text>
        <dbReference type="Rhea" id="RHEA:21196"/>
        <dbReference type="ChEBI" id="CHEBI:57844"/>
        <dbReference type="ChEBI" id="CHEBI:58140"/>
        <dbReference type="ChEBI" id="CHEBI:58199"/>
        <dbReference type="ChEBI" id="CHEBI:58207"/>
        <dbReference type="EC" id="2.1.1.14"/>
    </reaction>
</comment>
<comment type="cofactor">
    <cofactor evidence="1">
        <name>Zn(2+)</name>
        <dbReference type="ChEBI" id="CHEBI:29105"/>
    </cofactor>
    <text evidence="1">Binds 1 zinc ion per subunit.</text>
</comment>
<comment type="pathway">
    <text evidence="1">Amino-acid biosynthesis; L-methionine biosynthesis via de novo pathway; L-methionine from L-homocysteine (MetE route): step 1/1.</text>
</comment>
<comment type="similarity">
    <text evidence="1">Belongs to the vitamin-B12 independent methionine synthase family.</text>
</comment>
<gene>
    <name evidence="1" type="primary">metE</name>
    <name type="ordered locus">Rmag_0985</name>
</gene>
<sequence length="758" mass="86891">MVTIHNLGFPRIGRHRELKFALEKYWSNAISQDELLQTASTLCKQYWQNQNKLDWVPVGDFSFYDHVLDMSFLLGNIPKRAENLSDNELDNYFRVARGRAFINESERTCIQAGEMTKWFDTNYHYIVPEFSQETNFALQAQRLIAQIRQAQAQGVKVKPVVIGPVTYLWLGKSKDKINKLDLLDSLVKVYTQLFDELVKLGIEWIQVDEPILVTELETDWQVAFRKAYDILANSPIKLLLVSYFGTLQDNLSFACGLPIDGLHIDAINAKDEVQLLIDSLSDDKILSLGVVNGRNIWKTDLSTTLLWLEPIHQQLQNRLWLAPSCSLLHVPVDLDSEQELNDDIKSWLGFAVQKLEELSLLAQALNQGQASVTKEIANNIDAINSKKYSPLVHNAKVKERIAKVNDELGNRQSDYKSRTKLQSEKFNLPLYPTTTIGSFPQTLEIRQARHDYKLGKLSAEQYMQTMRSEIRYCVQVQEHLGLDVLVHGEPERNDMVEYFGQQLSGYVFSQFGWVQSYGSRCVKPPIIFGDIFRPKPMTLDWITYAQSLTNKPMKGMITGPVTMLNWSFVRDDQPRATTCLQLSLAIRDEVLDLEKSNINIIQIDEAALREGLPLRKSQWQTYLDWAIRAYRVSANGVSDETQIHTHMCYSEFNDIIEAIAQMDADVITIETSRSDMELLDIFDEFDYPNEIGPGVYDIHSPNIPSVDSIVELMQKAAKYIPIKRLWVNPDCGLKTRHWDEVNLALTNMVLASQQLRKN</sequence>
<organism>
    <name type="scientific">Ruthia magnifica subsp. Calyptogena magnifica</name>
    <dbReference type="NCBI Taxonomy" id="413404"/>
    <lineage>
        <taxon>Bacteria</taxon>
        <taxon>Pseudomonadati</taxon>
        <taxon>Pseudomonadota</taxon>
        <taxon>Gammaproteobacteria</taxon>
        <taxon>Candidatus Pseudothioglobaceae</taxon>
        <taxon>Candidatus Ruthturnera</taxon>
    </lineage>
</organism>
<proteinExistence type="inferred from homology"/>
<feature type="chain" id="PRO_1000017268" description="5-methyltetrahydropteroyltriglutamate--homocysteine methyltransferase">
    <location>
        <begin position="1"/>
        <end position="758"/>
    </location>
</feature>
<feature type="active site" description="Proton donor" evidence="1">
    <location>
        <position position="699"/>
    </location>
</feature>
<feature type="binding site" evidence="1">
    <location>
        <begin position="16"/>
        <end position="19"/>
    </location>
    <ligand>
        <name>5-methyltetrahydropteroyltri-L-glutamate</name>
        <dbReference type="ChEBI" id="CHEBI:58207"/>
    </ligand>
</feature>
<feature type="binding site" evidence="1">
    <location>
        <position position="117"/>
    </location>
    <ligand>
        <name>5-methyltetrahydropteroyltri-L-glutamate</name>
        <dbReference type="ChEBI" id="CHEBI:58207"/>
    </ligand>
</feature>
<feature type="binding site" evidence="1">
    <location>
        <begin position="436"/>
        <end position="438"/>
    </location>
    <ligand>
        <name>L-homocysteine</name>
        <dbReference type="ChEBI" id="CHEBI:58199"/>
    </ligand>
</feature>
<feature type="binding site" evidence="1">
    <location>
        <begin position="436"/>
        <end position="438"/>
    </location>
    <ligand>
        <name>L-methionine</name>
        <dbReference type="ChEBI" id="CHEBI:57844"/>
    </ligand>
</feature>
<feature type="binding site" evidence="1">
    <location>
        <position position="489"/>
    </location>
    <ligand>
        <name>L-homocysteine</name>
        <dbReference type="ChEBI" id="CHEBI:58199"/>
    </ligand>
</feature>
<feature type="binding site" evidence="1">
    <location>
        <position position="489"/>
    </location>
    <ligand>
        <name>L-methionine</name>
        <dbReference type="ChEBI" id="CHEBI:57844"/>
    </ligand>
</feature>
<feature type="binding site" evidence="1">
    <location>
        <begin position="520"/>
        <end position="521"/>
    </location>
    <ligand>
        <name>5-methyltetrahydropteroyltri-L-glutamate</name>
        <dbReference type="ChEBI" id="CHEBI:58207"/>
    </ligand>
</feature>
<feature type="binding site" evidence="1">
    <location>
        <position position="566"/>
    </location>
    <ligand>
        <name>5-methyltetrahydropteroyltri-L-glutamate</name>
        <dbReference type="ChEBI" id="CHEBI:58207"/>
    </ligand>
</feature>
<feature type="binding site" evidence="1">
    <location>
        <position position="604"/>
    </location>
    <ligand>
        <name>L-homocysteine</name>
        <dbReference type="ChEBI" id="CHEBI:58199"/>
    </ligand>
</feature>
<feature type="binding site" evidence="1">
    <location>
        <position position="604"/>
    </location>
    <ligand>
        <name>L-methionine</name>
        <dbReference type="ChEBI" id="CHEBI:57844"/>
    </ligand>
</feature>
<feature type="binding site" evidence="1">
    <location>
        <position position="610"/>
    </location>
    <ligand>
        <name>5-methyltetrahydropteroyltri-L-glutamate</name>
        <dbReference type="ChEBI" id="CHEBI:58207"/>
    </ligand>
</feature>
<feature type="binding site" evidence="1">
    <location>
        <position position="646"/>
    </location>
    <ligand>
        <name>Zn(2+)</name>
        <dbReference type="ChEBI" id="CHEBI:29105"/>
        <note>catalytic</note>
    </ligand>
</feature>
<feature type="binding site" evidence="1">
    <location>
        <position position="648"/>
    </location>
    <ligand>
        <name>Zn(2+)</name>
        <dbReference type="ChEBI" id="CHEBI:29105"/>
        <note>catalytic</note>
    </ligand>
</feature>
<feature type="binding site" evidence="1">
    <location>
        <position position="670"/>
    </location>
    <ligand>
        <name>Zn(2+)</name>
        <dbReference type="ChEBI" id="CHEBI:29105"/>
        <note>catalytic</note>
    </ligand>
</feature>
<feature type="binding site" evidence="1">
    <location>
        <position position="731"/>
    </location>
    <ligand>
        <name>Zn(2+)</name>
        <dbReference type="ChEBI" id="CHEBI:29105"/>
        <note>catalytic</note>
    </ligand>
</feature>
<dbReference type="EC" id="2.1.1.14" evidence="1"/>
<dbReference type="EMBL" id="CP000488">
    <property type="protein sequence ID" value="ABL02691.1"/>
    <property type="molecule type" value="Genomic_DNA"/>
</dbReference>
<dbReference type="RefSeq" id="WP_011738316.1">
    <property type="nucleotide sequence ID" value="NC_008610.1"/>
</dbReference>
<dbReference type="SMR" id="A1AXN4"/>
<dbReference type="STRING" id="413404.Rmag_0985"/>
<dbReference type="KEGG" id="rma:Rmag_0985"/>
<dbReference type="eggNOG" id="COG0620">
    <property type="taxonomic scope" value="Bacteria"/>
</dbReference>
<dbReference type="HOGENOM" id="CLU_013175_0_0_6"/>
<dbReference type="OrthoDB" id="244285at2"/>
<dbReference type="UniPathway" id="UPA00051">
    <property type="reaction ID" value="UER00082"/>
</dbReference>
<dbReference type="Proteomes" id="UP000002587">
    <property type="component" value="Chromosome"/>
</dbReference>
<dbReference type="GO" id="GO:0003871">
    <property type="term" value="F:5-methyltetrahydropteroyltriglutamate-homocysteine S-methyltransferase activity"/>
    <property type="evidence" value="ECO:0007669"/>
    <property type="project" value="UniProtKB-UniRule"/>
</dbReference>
<dbReference type="GO" id="GO:0008270">
    <property type="term" value="F:zinc ion binding"/>
    <property type="evidence" value="ECO:0007669"/>
    <property type="project" value="InterPro"/>
</dbReference>
<dbReference type="GO" id="GO:0009086">
    <property type="term" value="P:methionine biosynthetic process"/>
    <property type="evidence" value="ECO:0007669"/>
    <property type="project" value="UniProtKB-UniRule"/>
</dbReference>
<dbReference type="GO" id="GO:0032259">
    <property type="term" value="P:methylation"/>
    <property type="evidence" value="ECO:0007669"/>
    <property type="project" value="UniProtKB-KW"/>
</dbReference>
<dbReference type="CDD" id="cd03311">
    <property type="entry name" value="CIMS_C_terminal_like"/>
    <property type="match status" value="1"/>
</dbReference>
<dbReference type="CDD" id="cd03312">
    <property type="entry name" value="CIMS_N_terminal_like"/>
    <property type="match status" value="1"/>
</dbReference>
<dbReference type="FunFam" id="3.20.20.210:FF:000002">
    <property type="entry name" value="5-methyltetrahydropteroyltriglutamate--homocysteine methyltransferase"/>
    <property type="match status" value="1"/>
</dbReference>
<dbReference type="Gene3D" id="3.20.20.210">
    <property type="match status" value="2"/>
</dbReference>
<dbReference type="HAMAP" id="MF_00172">
    <property type="entry name" value="Meth_synth"/>
    <property type="match status" value="1"/>
</dbReference>
<dbReference type="InterPro" id="IPR013215">
    <property type="entry name" value="Cbl-indep_Met_Synth_N"/>
</dbReference>
<dbReference type="InterPro" id="IPR006276">
    <property type="entry name" value="Cobalamin-indep_Met_synthase"/>
</dbReference>
<dbReference type="InterPro" id="IPR002629">
    <property type="entry name" value="Met_Synth_C/arc"/>
</dbReference>
<dbReference type="InterPro" id="IPR038071">
    <property type="entry name" value="UROD/MetE-like_sf"/>
</dbReference>
<dbReference type="NCBIfam" id="TIGR01371">
    <property type="entry name" value="met_syn_B12ind"/>
    <property type="match status" value="1"/>
</dbReference>
<dbReference type="NCBIfam" id="NF003556">
    <property type="entry name" value="PRK05222.1"/>
    <property type="match status" value="1"/>
</dbReference>
<dbReference type="PANTHER" id="PTHR30519">
    <property type="entry name" value="5-METHYLTETRAHYDROPTEROYLTRIGLUTAMATE--HOMOCYSTEINE METHYLTRANSFERASE"/>
    <property type="match status" value="1"/>
</dbReference>
<dbReference type="Pfam" id="PF08267">
    <property type="entry name" value="Meth_synt_1"/>
    <property type="match status" value="1"/>
</dbReference>
<dbReference type="Pfam" id="PF01717">
    <property type="entry name" value="Meth_synt_2"/>
    <property type="match status" value="1"/>
</dbReference>
<dbReference type="PIRSF" id="PIRSF000382">
    <property type="entry name" value="MeTrfase_B12_ind"/>
    <property type="match status" value="1"/>
</dbReference>
<dbReference type="SUPFAM" id="SSF51726">
    <property type="entry name" value="UROD/MetE-like"/>
    <property type="match status" value="2"/>
</dbReference>
<reference key="1">
    <citation type="journal article" date="2007" name="Science">
        <title>The Calyptogena magnifica chemoautotrophic symbiont genome.</title>
        <authorList>
            <person name="Newton I.L.G."/>
            <person name="Woyke T."/>
            <person name="Auchtung T.A."/>
            <person name="Dilly G.F."/>
            <person name="Dutton R.J."/>
            <person name="Fisher M.C."/>
            <person name="Fontanez K.M."/>
            <person name="Lau E."/>
            <person name="Stewart F.J."/>
            <person name="Richardson P.M."/>
            <person name="Barry K.W."/>
            <person name="Saunders E."/>
            <person name="Detter J.C."/>
            <person name="Wu D."/>
            <person name="Eisen J.A."/>
            <person name="Cavanaugh C.M."/>
        </authorList>
    </citation>
    <scope>NUCLEOTIDE SEQUENCE [LARGE SCALE GENOMIC DNA]</scope>
</reference>
<evidence type="ECO:0000255" key="1">
    <source>
        <dbReference type="HAMAP-Rule" id="MF_00172"/>
    </source>
</evidence>
<accession>A1AXN4</accession>